<protein>
    <recommendedName>
        <fullName evidence="1">Thiazole synthase</fullName>
        <ecNumber evidence="1">2.8.1.10</ecNumber>
    </recommendedName>
</protein>
<organism>
    <name type="scientific">Bacillus velezensis (strain DSM 23117 / BGSC 10A6 / LMG 26770 / FZB42)</name>
    <name type="common">Bacillus amyloliquefaciens subsp. plantarum</name>
    <dbReference type="NCBI Taxonomy" id="326423"/>
    <lineage>
        <taxon>Bacteria</taxon>
        <taxon>Bacillati</taxon>
        <taxon>Bacillota</taxon>
        <taxon>Bacilli</taxon>
        <taxon>Bacillales</taxon>
        <taxon>Bacillaceae</taxon>
        <taxon>Bacillus</taxon>
        <taxon>Bacillus amyloliquefaciens group</taxon>
    </lineage>
</organism>
<gene>
    <name evidence="1" type="primary">thiG</name>
    <name type="ordered locus">RBAM_011700</name>
</gene>
<name>THIG_BACVZ</name>
<keyword id="KW-0963">Cytoplasm</keyword>
<keyword id="KW-0704">Schiff base</keyword>
<keyword id="KW-0784">Thiamine biosynthesis</keyword>
<keyword id="KW-0808">Transferase</keyword>
<accession>A7Z3F8</accession>
<reference key="1">
    <citation type="journal article" date="2007" name="Nat. Biotechnol.">
        <title>Comparative analysis of the complete genome sequence of the plant growth-promoting bacterium Bacillus amyloliquefaciens FZB42.</title>
        <authorList>
            <person name="Chen X.H."/>
            <person name="Koumoutsi A."/>
            <person name="Scholz R."/>
            <person name="Eisenreich A."/>
            <person name="Schneider K."/>
            <person name="Heinemeyer I."/>
            <person name="Morgenstern B."/>
            <person name="Voss B."/>
            <person name="Hess W.R."/>
            <person name="Reva O."/>
            <person name="Junge H."/>
            <person name="Voigt B."/>
            <person name="Jungblut P.R."/>
            <person name="Vater J."/>
            <person name="Suessmuth R."/>
            <person name="Liesegang H."/>
            <person name="Strittmatter A."/>
            <person name="Gottschalk G."/>
            <person name="Borriss R."/>
        </authorList>
    </citation>
    <scope>NUCLEOTIDE SEQUENCE [LARGE SCALE GENOMIC DNA]</scope>
    <source>
        <strain>DSM 23117 / BGSC 10A6 / LMG 26770 / FZB42</strain>
    </source>
</reference>
<dbReference type="EC" id="2.8.1.10" evidence="1"/>
<dbReference type="EMBL" id="CP000560">
    <property type="protein sequence ID" value="ABS73534.1"/>
    <property type="molecule type" value="Genomic_DNA"/>
</dbReference>
<dbReference type="SMR" id="A7Z3F8"/>
<dbReference type="KEGG" id="bay:RBAM_011700"/>
<dbReference type="HOGENOM" id="CLU_062233_1_0_9"/>
<dbReference type="UniPathway" id="UPA00060"/>
<dbReference type="Proteomes" id="UP000001120">
    <property type="component" value="Chromosome"/>
</dbReference>
<dbReference type="GO" id="GO:0005737">
    <property type="term" value="C:cytoplasm"/>
    <property type="evidence" value="ECO:0007669"/>
    <property type="project" value="UniProtKB-SubCell"/>
</dbReference>
<dbReference type="GO" id="GO:1990107">
    <property type="term" value="F:thiazole synthase activity"/>
    <property type="evidence" value="ECO:0007669"/>
    <property type="project" value="UniProtKB-EC"/>
</dbReference>
<dbReference type="GO" id="GO:0009229">
    <property type="term" value="P:thiamine diphosphate biosynthetic process"/>
    <property type="evidence" value="ECO:0007669"/>
    <property type="project" value="UniProtKB-UniRule"/>
</dbReference>
<dbReference type="CDD" id="cd04728">
    <property type="entry name" value="ThiG"/>
    <property type="match status" value="1"/>
</dbReference>
<dbReference type="FunFam" id="3.20.20.70:FF:000049">
    <property type="entry name" value="Thiazole synthase"/>
    <property type="match status" value="1"/>
</dbReference>
<dbReference type="Gene3D" id="3.20.20.70">
    <property type="entry name" value="Aldolase class I"/>
    <property type="match status" value="1"/>
</dbReference>
<dbReference type="HAMAP" id="MF_00443">
    <property type="entry name" value="ThiG"/>
    <property type="match status" value="1"/>
</dbReference>
<dbReference type="InterPro" id="IPR013785">
    <property type="entry name" value="Aldolase_TIM"/>
</dbReference>
<dbReference type="InterPro" id="IPR033983">
    <property type="entry name" value="Thiazole_synthase_ThiG"/>
</dbReference>
<dbReference type="InterPro" id="IPR008867">
    <property type="entry name" value="ThiG"/>
</dbReference>
<dbReference type="PANTHER" id="PTHR34266">
    <property type="entry name" value="THIAZOLE SYNTHASE"/>
    <property type="match status" value="1"/>
</dbReference>
<dbReference type="PANTHER" id="PTHR34266:SF2">
    <property type="entry name" value="THIAZOLE SYNTHASE"/>
    <property type="match status" value="1"/>
</dbReference>
<dbReference type="Pfam" id="PF05690">
    <property type="entry name" value="ThiG"/>
    <property type="match status" value="1"/>
</dbReference>
<dbReference type="SUPFAM" id="SSF110399">
    <property type="entry name" value="ThiG-like"/>
    <property type="match status" value="1"/>
</dbReference>
<feature type="chain" id="PRO_1000124599" description="Thiazole synthase">
    <location>
        <begin position="1"/>
        <end position="254"/>
    </location>
</feature>
<feature type="active site" description="Schiff-base intermediate with DXP" evidence="1">
    <location>
        <position position="96"/>
    </location>
</feature>
<feature type="binding site" evidence="1">
    <location>
        <position position="157"/>
    </location>
    <ligand>
        <name>1-deoxy-D-xylulose 5-phosphate</name>
        <dbReference type="ChEBI" id="CHEBI:57792"/>
    </ligand>
</feature>
<feature type="binding site" evidence="1">
    <location>
        <begin position="183"/>
        <end position="184"/>
    </location>
    <ligand>
        <name>1-deoxy-D-xylulose 5-phosphate</name>
        <dbReference type="ChEBI" id="CHEBI:57792"/>
    </ligand>
</feature>
<feature type="binding site" evidence="1">
    <location>
        <begin position="205"/>
        <end position="206"/>
    </location>
    <ligand>
        <name>1-deoxy-D-xylulose 5-phosphate</name>
        <dbReference type="ChEBI" id="CHEBI:57792"/>
    </ligand>
</feature>
<comment type="function">
    <text evidence="1">Catalyzes the rearrangement of 1-deoxy-D-xylulose 5-phosphate (DXP) to produce the thiazole phosphate moiety of thiamine. Sulfur is provided by the thiocarboxylate moiety of the carrier protein ThiS. In vitro, sulfur can be provided by H(2)S.</text>
</comment>
<comment type="catalytic activity">
    <reaction evidence="1">
        <text>[ThiS sulfur-carrier protein]-C-terminal-Gly-aminoethanethioate + 2-iminoacetate + 1-deoxy-D-xylulose 5-phosphate = [ThiS sulfur-carrier protein]-C-terminal Gly-Gly + 2-[(2R,5Z)-2-carboxy-4-methylthiazol-5(2H)-ylidene]ethyl phosphate + 2 H2O + H(+)</text>
        <dbReference type="Rhea" id="RHEA:26297"/>
        <dbReference type="Rhea" id="RHEA-COMP:12909"/>
        <dbReference type="Rhea" id="RHEA-COMP:19908"/>
        <dbReference type="ChEBI" id="CHEBI:15377"/>
        <dbReference type="ChEBI" id="CHEBI:15378"/>
        <dbReference type="ChEBI" id="CHEBI:57792"/>
        <dbReference type="ChEBI" id="CHEBI:62899"/>
        <dbReference type="ChEBI" id="CHEBI:77846"/>
        <dbReference type="ChEBI" id="CHEBI:90778"/>
        <dbReference type="ChEBI" id="CHEBI:232372"/>
        <dbReference type="EC" id="2.8.1.10"/>
    </reaction>
</comment>
<comment type="pathway">
    <text evidence="1">Cofactor biosynthesis; thiamine diphosphate biosynthesis.</text>
</comment>
<comment type="subunit">
    <text evidence="1">Homotetramer. Forms heterodimers with either ThiH or ThiS.</text>
</comment>
<comment type="subcellular location">
    <subcellularLocation>
        <location evidence="1">Cytoplasm</location>
    </subcellularLocation>
</comment>
<comment type="similarity">
    <text evidence="1">Belongs to the ThiG family.</text>
</comment>
<sequence length="254" mass="26963">MLTIGGKQFQSRLLLGTGKYPSFEIQKEAVAVSESDILTFAVRRMNIFEESQPNFLEQLDLSKYTLLPNTAGAATAEEAVRIARLAKASGLCDMIKVEVIGCSRSLLPDPVETLKASEQLLEEGFIVLPYTSDDVVLARRLEELGVHAIMPGASPIGSGQGILNPLNLSFIIEQAKVPVIVDAGVGSSKDAAYAMELGADGVLLNTAVSGADDPVKMARAMKLAVEAGRLSYEAGRIPVKDYGTASSPRDGLPV</sequence>
<proteinExistence type="inferred from homology"/>
<evidence type="ECO:0000255" key="1">
    <source>
        <dbReference type="HAMAP-Rule" id="MF_00443"/>
    </source>
</evidence>